<protein>
    <recommendedName>
        <fullName evidence="1">GMP synthase [glutamine-hydrolyzing]</fullName>
        <ecNumber evidence="1">6.3.5.2</ecNumber>
    </recommendedName>
    <alternativeName>
        <fullName evidence="1">GMP synthetase</fullName>
    </alternativeName>
    <alternativeName>
        <fullName evidence="1">Glutamine amidotransferase</fullName>
    </alternativeName>
</protein>
<gene>
    <name evidence="1" type="primary">guaA</name>
    <name type="ordered locus">YPDSF_2215</name>
</gene>
<name>GUAA_YERPP</name>
<keyword id="KW-0067">ATP-binding</keyword>
<keyword id="KW-0315">Glutamine amidotransferase</keyword>
<keyword id="KW-0332">GMP biosynthesis</keyword>
<keyword id="KW-0436">Ligase</keyword>
<keyword id="KW-0547">Nucleotide-binding</keyword>
<keyword id="KW-0658">Purine biosynthesis</keyword>
<evidence type="ECO:0000255" key="1">
    <source>
        <dbReference type="HAMAP-Rule" id="MF_00344"/>
    </source>
</evidence>
<dbReference type="EC" id="6.3.5.2" evidence="1"/>
<dbReference type="EMBL" id="CP000668">
    <property type="protein sequence ID" value="ABP40590.1"/>
    <property type="molecule type" value="Genomic_DNA"/>
</dbReference>
<dbReference type="RefSeq" id="WP_002209807.1">
    <property type="nucleotide sequence ID" value="NZ_CP009715.1"/>
</dbReference>
<dbReference type="SMR" id="A4TMS8"/>
<dbReference type="MEROPS" id="C26.957"/>
<dbReference type="GeneID" id="57975827"/>
<dbReference type="KEGG" id="ypp:YPDSF_2215"/>
<dbReference type="PATRIC" id="fig|386656.14.peg.3702"/>
<dbReference type="UniPathway" id="UPA00189">
    <property type="reaction ID" value="UER00296"/>
</dbReference>
<dbReference type="GO" id="GO:0005829">
    <property type="term" value="C:cytosol"/>
    <property type="evidence" value="ECO:0007669"/>
    <property type="project" value="TreeGrafter"/>
</dbReference>
<dbReference type="GO" id="GO:0005524">
    <property type="term" value="F:ATP binding"/>
    <property type="evidence" value="ECO:0007669"/>
    <property type="project" value="UniProtKB-UniRule"/>
</dbReference>
<dbReference type="GO" id="GO:0003921">
    <property type="term" value="F:GMP synthase activity"/>
    <property type="evidence" value="ECO:0007669"/>
    <property type="project" value="InterPro"/>
</dbReference>
<dbReference type="CDD" id="cd01742">
    <property type="entry name" value="GATase1_GMP_Synthase"/>
    <property type="match status" value="1"/>
</dbReference>
<dbReference type="CDD" id="cd01997">
    <property type="entry name" value="GMP_synthase_C"/>
    <property type="match status" value="1"/>
</dbReference>
<dbReference type="FunFam" id="3.30.300.10:FF:000002">
    <property type="entry name" value="GMP synthase [glutamine-hydrolyzing]"/>
    <property type="match status" value="1"/>
</dbReference>
<dbReference type="FunFam" id="3.40.50.620:FF:000001">
    <property type="entry name" value="GMP synthase [glutamine-hydrolyzing]"/>
    <property type="match status" value="1"/>
</dbReference>
<dbReference type="FunFam" id="3.40.50.880:FF:000001">
    <property type="entry name" value="GMP synthase [glutamine-hydrolyzing]"/>
    <property type="match status" value="1"/>
</dbReference>
<dbReference type="Gene3D" id="3.30.300.10">
    <property type="match status" value="1"/>
</dbReference>
<dbReference type="Gene3D" id="3.40.50.880">
    <property type="match status" value="1"/>
</dbReference>
<dbReference type="Gene3D" id="3.40.50.620">
    <property type="entry name" value="HUPs"/>
    <property type="match status" value="1"/>
</dbReference>
<dbReference type="HAMAP" id="MF_00344">
    <property type="entry name" value="GMP_synthase"/>
    <property type="match status" value="1"/>
</dbReference>
<dbReference type="InterPro" id="IPR029062">
    <property type="entry name" value="Class_I_gatase-like"/>
</dbReference>
<dbReference type="InterPro" id="IPR017926">
    <property type="entry name" value="GATASE"/>
</dbReference>
<dbReference type="InterPro" id="IPR001674">
    <property type="entry name" value="GMP_synth_C"/>
</dbReference>
<dbReference type="InterPro" id="IPR004739">
    <property type="entry name" value="GMP_synth_GATase"/>
</dbReference>
<dbReference type="InterPro" id="IPR022955">
    <property type="entry name" value="GMP_synthase"/>
</dbReference>
<dbReference type="InterPro" id="IPR025777">
    <property type="entry name" value="GMPS_ATP_PPase_dom"/>
</dbReference>
<dbReference type="InterPro" id="IPR022310">
    <property type="entry name" value="NAD/GMP_synthase"/>
</dbReference>
<dbReference type="InterPro" id="IPR014729">
    <property type="entry name" value="Rossmann-like_a/b/a_fold"/>
</dbReference>
<dbReference type="NCBIfam" id="TIGR00884">
    <property type="entry name" value="guaA_Cterm"/>
    <property type="match status" value="1"/>
</dbReference>
<dbReference type="NCBIfam" id="TIGR00888">
    <property type="entry name" value="guaA_Nterm"/>
    <property type="match status" value="1"/>
</dbReference>
<dbReference type="NCBIfam" id="NF000848">
    <property type="entry name" value="PRK00074.1"/>
    <property type="match status" value="1"/>
</dbReference>
<dbReference type="PANTHER" id="PTHR11922:SF2">
    <property type="entry name" value="GMP SYNTHASE [GLUTAMINE-HYDROLYZING]"/>
    <property type="match status" value="1"/>
</dbReference>
<dbReference type="PANTHER" id="PTHR11922">
    <property type="entry name" value="GMP SYNTHASE-RELATED"/>
    <property type="match status" value="1"/>
</dbReference>
<dbReference type="Pfam" id="PF00117">
    <property type="entry name" value="GATase"/>
    <property type="match status" value="1"/>
</dbReference>
<dbReference type="Pfam" id="PF00958">
    <property type="entry name" value="GMP_synt_C"/>
    <property type="match status" value="1"/>
</dbReference>
<dbReference type="Pfam" id="PF02540">
    <property type="entry name" value="NAD_synthase"/>
    <property type="match status" value="1"/>
</dbReference>
<dbReference type="PRINTS" id="PR00097">
    <property type="entry name" value="ANTSNTHASEII"/>
</dbReference>
<dbReference type="PRINTS" id="PR00096">
    <property type="entry name" value="GATASE"/>
</dbReference>
<dbReference type="SUPFAM" id="SSF52402">
    <property type="entry name" value="Adenine nucleotide alpha hydrolases-like"/>
    <property type="match status" value="1"/>
</dbReference>
<dbReference type="SUPFAM" id="SSF52317">
    <property type="entry name" value="Class I glutamine amidotransferase-like"/>
    <property type="match status" value="1"/>
</dbReference>
<dbReference type="SUPFAM" id="SSF54810">
    <property type="entry name" value="GMP synthetase C-terminal dimerisation domain"/>
    <property type="match status" value="1"/>
</dbReference>
<dbReference type="PROSITE" id="PS51273">
    <property type="entry name" value="GATASE_TYPE_1"/>
    <property type="match status" value="1"/>
</dbReference>
<dbReference type="PROSITE" id="PS51553">
    <property type="entry name" value="GMPS_ATP_PPASE"/>
    <property type="match status" value="1"/>
</dbReference>
<proteinExistence type="inferred from homology"/>
<sequence>MTKNIHKHRILILDFGSQYTQLLARRVREIGVYCELWAWDVTEAQIREFNPSGIILSGSPESTIENGSPRAPDYVFTAGVPVLGVCYGMQTMAIQLGGKVESSNQREFGYAQVEIKADSALIRDIKDAINPAGEAVLDVWMSHGDKVAEIPADFVTVASTDTCPFAIMANEEKRFYGVQFHPEVTHTKQGLRLLERFVLGICGCEALWTSATIIEDAIVRLREQIGDDHVILGLSGGVDSSVTAMLLHRAIGKRLTCVFVDNGLLRLNEADQVLEMFGDKFGLNIVHVAAEDRFLSALTGVDEPEAKRKIIGRVFVELFDEEACKQEQVKWLAQGTIYPDVIESAASATGKAHVIKSHHNVGGLPKEMKLGLVEPLKELFKDEVRKIGLELGLPYDMLYRHPFPGPGLGVRVLGEVKKEYCDLLRRADAIFIEELHKADLYNKVSQAFTVFLPVRSVGVMGDGRKYDWVVSLRAVETVDFMTAHWAHLPYDFLGRVSNRIINEVNGISRVVYDISGKPPATIEWE</sequence>
<accession>A4TMS8</accession>
<feature type="chain" id="PRO_1000120462" description="GMP synthase [glutamine-hydrolyzing]">
    <location>
        <begin position="1"/>
        <end position="525"/>
    </location>
</feature>
<feature type="domain" description="Glutamine amidotransferase type-1" evidence="1">
    <location>
        <begin position="9"/>
        <end position="207"/>
    </location>
</feature>
<feature type="domain" description="GMPS ATP-PPase" evidence="1">
    <location>
        <begin position="208"/>
        <end position="400"/>
    </location>
</feature>
<feature type="active site" description="Nucleophile" evidence="1">
    <location>
        <position position="86"/>
    </location>
</feature>
<feature type="active site" evidence="1">
    <location>
        <position position="181"/>
    </location>
</feature>
<feature type="active site" evidence="1">
    <location>
        <position position="183"/>
    </location>
</feature>
<feature type="binding site" evidence="1">
    <location>
        <begin position="235"/>
        <end position="241"/>
    </location>
    <ligand>
        <name>ATP</name>
        <dbReference type="ChEBI" id="CHEBI:30616"/>
    </ligand>
</feature>
<organism>
    <name type="scientific">Yersinia pestis (strain Pestoides F)</name>
    <dbReference type="NCBI Taxonomy" id="386656"/>
    <lineage>
        <taxon>Bacteria</taxon>
        <taxon>Pseudomonadati</taxon>
        <taxon>Pseudomonadota</taxon>
        <taxon>Gammaproteobacteria</taxon>
        <taxon>Enterobacterales</taxon>
        <taxon>Yersiniaceae</taxon>
        <taxon>Yersinia</taxon>
    </lineage>
</organism>
<reference key="1">
    <citation type="submission" date="2007-02" db="EMBL/GenBank/DDBJ databases">
        <title>Complete sequence of chromosome of Yersinia pestis Pestoides F.</title>
        <authorList>
            <consortium name="US DOE Joint Genome Institute"/>
            <person name="Copeland A."/>
            <person name="Lucas S."/>
            <person name="Lapidus A."/>
            <person name="Barry K."/>
            <person name="Detter J.C."/>
            <person name="Glavina del Rio T."/>
            <person name="Hammon N."/>
            <person name="Israni S."/>
            <person name="Dalin E."/>
            <person name="Tice H."/>
            <person name="Pitluck S."/>
            <person name="Di Bartolo G."/>
            <person name="Chain P."/>
            <person name="Malfatti S."/>
            <person name="Shin M."/>
            <person name="Vergez L."/>
            <person name="Schmutz J."/>
            <person name="Larimer F."/>
            <person name="Land M."/>
            <person name="Hauser L."/>
            <person name="Worsham P."/>
            <person name="Chu M."/>
            <person name="Bearden S."/>
            <person name="Garcia E."/>
            <person name="Richardson P."/>
        </authorList>
    </citation>
    <scope>NUCLEOTIDE SEQUENCE [LARGE SCALE GENOMIC DNA]</scope>
    <source>
        <strain>Pestoides F</strain>
    </source>
</reference>
<comment type="function">
    <text evidence="1">Catalyzes the synthesis of GMP from XMP.</text>
</comment>
<comment type="catalytic activity">
    <reaction evidence="1">
        <text>XMP + L-glutamine + ATP + H2O = GMP + L-glutamate + AMP + diphosphate + 2 H(+)</text>
        <dbReference type="Rhea" id="RHEA:11680"/>
        <dbReference type="ChEBI" id="CHEBI:15377"/>
        <dbReference type="ChEBI" id="CHEBI:15378"/>
        <dbReference type="ChEBI" id="CHEBI:29985"/>
        <dbReference type="ChEBI" id="CHEBI:30616"/>
        <dbReference type="ChEBI" id="CHEBI:33019"/>
        <dbReference type="ChEBI" id="CHEBI:57464"/>
        <dbReference type="ChEBI" id="CHEBI:58115"/>
        <dbReference type="ChEBI" id="CHEBI:58359"/>
        <dbReference type="ChEBI" id="CHEBI:456215"/>
        <dbReference type="EC" id="6.3.5.2"/>
    </reaction>
</comment>
<comment type="pathway">
    <text evidence="1">Purine metabolism; GMP biosynthesis; GMP from XMP (L-Gln route): step 1/1.</text>
</comment>
<comment type="subunit">
    <text evidence="1">Homodimer.</text>
</comment>